<dbReference type="EMBL" id="AP009384">
    <property type="protein sequence ID" value="BAF86884.1"/>
    <property type="molecule type" value="Genomic_DNA"/>
</dbReference>
<dbReference type="RefSeq" id="WP_012169417.1">
    <property type="nucleotide sequence ID" value="NC_009937.1"/>
</dbReference>
<dbReference type="SMR" id="A8HTY4"/>
<dbReference type="STRING" id="438753.AZC_0886"/>
<dbReference type="KEGG" id="azc:AZC_0886"/>
<dbReference type="eggNOG" id="COG0222">
    <property type="taxonomic scope" value="Bacteria"/>
</dbReference>
<dbReference type="HOGENOM" id="CLU_086499_3_0_5"/>
<dbReference type="Proteomes" id="UP000000270">
    <property type="component" value="Chromosome"/>
</dbReference>
<dbReference type="GO" id="GO:0022625">
    <property type="term" value="C:cytosolic large ribosomal subunit"/>
    <property type="evidence" value="ECO:0007669"/>
    <property type="project" value="TreeGrafter"/>
</dbReference>
<dbReference type="GO" id="GO:0003729">
    <property type="term" value="F:mRNA binding"/>
    <property type="evidence" value="ECO:0007669"/>
    <property type="project" value="TreeGrafter"/>
</dbReference>
<dbReference type="GO" id="GO:0003735">
    <property type="term" value="F:structural constituent of ribosome"/>
    <property type="evidence" value="ECO:0007669"/>
    <property type="project" value="InterPro"/>
</dbReference>
<dbReference type="GO" id="GO:0006412">
    <property type="term" value="P:translation"/>
    <property type="evidence" value="ECO:0007669"/>
    <property type="project" value="UniProtKB-UniRule"/>
</dbReference>
<dbReference type="CDD" id="cd00387">
    <property type="entry name" value="Ribosomal_L7_L12"/>
    <property type="match status" value="1"/>
</dbReference>
<dbReference type="FunFam" id="1.20.5.710:FF:000007">
    <property type="entry name" value="50S ribosomal protein L7/L12"/>
    <property type="match status" value="1"/>
</dbReference>
<dbReference type="FunFam" id="3.30.1390.10:FF:000001">
    <property type="entry name" value="50S ribosomal protein L7/L12"/>
    <property type="match status" value="1"/>
</dbReference>
<dbReference type="Gene3D" id="3.30.1390.10">
    <property type="match status" value="1"/>
</dbReference>
<dbReference type="Gene3D" id="1.20.5.710">
    <property type="entry name" value="Single helix bin"/>
    <property type="match status" value="1"/>
</dbReference>
<dbReference type="HAMAP" id="MF_00368">
    <property type="entry name" value="Ribosomal_bL12"/>
    <property type="match status" value="1"/>
</dbReference>
<dbReference type="InterPro" id="IPR000206">
    <property type="entry name" value="Ribosomal_bL12"/>
</dbReference>
<dbReference type="InterPro" id="IPR013823">
    <property type="entry name" value="Ribosomal_bL12_C"/>
</dbReference>
<dbReference type="InterPro" id="IPR014719">
    <property type="entry name" value="Ribosomal_bL12_C/ClpS-like"/>
</dbReference>
<dbReference type="InterPro" id="IPR008932">
    <property type="entry name" value="Ribosomal_bL12_oligo"/>
</dbReference>
<dbReference type="InterPro" id="IPR036235">
    <property type="entry name" value="Ribosomal_bL12_oligo_N_sf"/>
</dbReference>
<dbReference type="NCBIfam" id="TIGR00855">
    <property type="entry name" value="L12"/>
    <property type="match status" value="1"/>
</dbReference>
<dbReference type="PANTHER" id="PTHR45987">
    <property type="entry name" value="39S RIBOSOMAL PROTEIN L12"/>
    <property type="match status" value="1"/>
</dbReference>
<dbReference type="PANTHER" id="PTHR45987:SF4">
    <property type="entry name" value="LARGE RIBOSOMAL SUBUNIT PROTEIN BL12M"/>
    <property type="match status" value="1"/>
</dbReference>
<dbReference type="Pfam" id="PF00542">
    <property type="entry name" value="Ribosomal_L12"/>
    <property type="match status" value="1"/>
</dbReference>
<dbReference type="Pfam" id="PF16320">
    <property type="entry name" value="Ribosomal_L12_N"/>
    <property type="match status" value="1"/>
</dbReference>
<dbReference type="SUPFAM" id="SSF54736">
    <property type="entry name" value="ClpS-like"/>
    <property type="match status" value="1"/>
</dbReference>
<dbReference type="SUPFAM" id="SSF48300">
    <property type="entry name" value="Ribosomal protein L7/12, oligomerisation (N-terminal) domain"/>
    <property type="match status" value="1"/>
</dbReference>
<sequence>MADLTKLVDELSSLTVLEAAELAKLLEEKWGVSAAAAVAVAAAPAAGGAAAAVEEQTEFTVVLANAGDKKIEVIKEVRAITGLGLKEAKDLVEGAPKPVKEGVAKDEAEKLKAQLEKAGAKVELK</sequence>
<protein>
    <recommendedName>
        <fullName evidence="1">Large ribosomal subunit protein bL12</fullName>
    </recommendedName>
    <alternativeName>
        <fullName evidence="2">50S ribosomal protein L7/L12</fullName>
    </alternativeName>
</protein>
<feature type="chain" id="PRO_1000072111" description="Large ribosomal subunit protein bL12">
    <location>
        <begin position="1"/>
        <end position="125"/>
    </location>
</feature>
<reference key="1">
    <citation type="submission" date="2007-04" db="EMBL/GenBank/DDBJ databases">
        <title>Complete genome sequence of the nitrogen-fixing bacterium Azorhizobium caulinodans ORS571.</title>
        <authorList>
            <person name="Lee K.B."/>
            <person name="Backer P.D."/>
            <person name="Aono T."/>
            <person name="Liu C.T."/>
            <person name="Suzuki S."/>
            <person name="Suzuki T."/>
            <person name="Kaneko T."/>
            <person name="Yamada M."/>
            <person name="Tabata S."/>
            <person name="Kupfer D.M."/>
            <person name="Najar F.Z."/>
            <person name="Wiley G.B."/>
            <person name="Roe B."/>
            <person name="Binnewies T."/>
            <person name="Ussery D."/>
            <person name="Vereecke D."/>
            <person name="Gevers D."/>
            <person name="Holsters M."/>
            <person name="Oyaizu H."/>
        </authorList>
    </citation>
    <scope>NUCLEOTIDE SEQUENCE [LARGE SCALE GENOMIC DNA]</scope>
    <source>
        <strain>ATCC 43989 / DSM 5975 / JCM 20966 / LMG 6465 / NBRC 14845 / NCIMB 13405 / ORS 571</strain>
    </source>
</reference>
<accession>A8HTY4</accession>
<organism>
    <name type="scientific">Azorhizobium caulinodans (strain ATCC 43989 / DSM 5975 / JCM 20966 / LMG 6465 / NBRC 14845 / NCIMB 13405 / ORS 571)</name>
    <dbReference type="NCBI Taxonomy" id="438753"/>
    <lineage>
        <taxon>Bacteria</taxon>
        <taxon>Pseudomonadati</taxon>
        <taxon>Pseudomonadota</taxon>
        <taxon>Alphaproteobacteria</taxon>
        <taxon>Hyphomicrobiales</taxon>
        <taxon>Xanthobacteraceae</taxon>
        <taxon>Azorhizobium</taxon>
    </lineage>
</organism>
<name>RL7_AZOC5</name>
<gene>
    <name evidence="1" type="primary">rplL</name>
    <name type="ordered locus">AZC_0886</name>
</gene>
<keyword id="KW-1185">Reference proteome</keyword>
<keyword id="KW-0687">Ribonucleoprotein</keyword>
<keyword id="KW-0689">Ribosomal protein</keyword>
<proteinExistence type="inferred from homology"/>
<comment type="function">
    <text evidence="1">Forms part of the ribosomal stalk which helps the ribosome interact with GTP-bound translation factors. Is thus essential for accurate translation.</text>
</comment>
<comment type="subunit">
    <text evidence="1">Homodimer. Part of the ribosomal stalk of the 50S ribosomal subunit. Forms a multimeric L10(L12)X complex, where L10 forms an elongated spine to which 2 to 4 L12 dimers bind in a sequential fashion. Binds GTP-bound translation factors.</text>
</comment>
<comment type="similarity">
    <text evidence="1">Belongs to the bacterial ribosomal protein bL12 family.</text>
</comment>
<evidence type="ECO:0000255" key="1">
    <source>
        <dbReference type="HAMAP-Rule" id="MF_00368"/>
    </source>
</evidence>
<evidence type="ECO:0000305" key="2"/>